<protein>
    <recommendedName>
        <fullName evidence="1">Acetyl-coenzyme A carboxylase carboxyl transferase subunit beta</fullName>
        <shortName evidence="1">ACCase subunit beta</shortName>
        <shortName evidence="1">Acetyl-CoA carboxylase carboxyltransferase subunit beta</shortName>
        <ecNumber evidence="1">2.1.3.15</ecNumber>
    </recommendedName>
</protein>
<accession>Q73Q54</accession>
<gene>
    <name evidence="1" type="primary">accD</name>
    <name type="ordered locus">TDE_0590</name>
</gene>
<organism>
    <name type="scientific">Treponema denticola (strain ATCC 35405 / DSM 14222 / CIP 103919 / JCM 8153 / KCTC 15104)</name>
    <dbReference type="NCBI Taxonomy" id="243275"/>
    <lineage>
        <taxon>Bacteria</taxon>
        <taxon>Pseudomonadati</taxon>
        <taxon>Spirochaetota</taxon>
        <taxon>Spirochaetia</taxon>
        <taxon>Spirochaetales</taxon>
        <taxon>Treponemataceae</taxon>
        <taxon>Treponema</taxon>
    </lineage>
</organism>
<feature type="chain" id="PRO_0000389896" description="Acetyl-coenzyme A carboxylase carboxyl transferase subunit beta">
    <location>
        <begin position="1"/>
        <end position="263"/>
    </location>
</feature>
<feature type="domain" description="CoA carboxyltransferase N-terminal" evidence="2">
    <location>
        <begin position="1"/>
        <end position="263"/>
    </location>
</feature>
<feature type="zinc finger region" description="C4-type" evidence="1">
    <location>
        <begin position="3"/>
        <end position="25"/>
    </location>
</feature>
<feature type="binding site" evidence="1">
    <location>
        <position position="3"/>
    </location>
    <ligand>
        <name>Zn(2+)</name>
        <dbReference type="ChEBI" id="CHEBI:29105"/>
    </ligand>
</feature>
<feature type="binding site" evidence="1">
    <location>
        <position position="6"/>
    </location>
    <ligand>
        <name>Zn(2+)</name>
        <dbReference type="ChEBI" id="CHEBI:29105"/>
    </ligand>
</feature>
<feature type="binding site" evidence="1">
    <location>
        <position position="22"/>
    </location>
    <ligand>
        <name>Zn(2+)</name>
        <dbReference type="ChEBI" id="CHEBI:29105"/>
    </ligand>
</feature>
<feature type="binding site" evidence="1">
    <location>
        <position position="25"/>
    </location>
    <ligand>
        <name>Zn(2+)</name>
        <dbReference type="ChEBI" id="CHEBI:29105"/>
    </ligand>
</feature>
<comment type="function">
    <text evidence="1">Component of the acetyl coenzyme A carboxylase (ACC) complex. Biotin carboxylase (BC) catalyzes the carboxylation of biotin on its carrier protein (BCCP) and then the CO(2) group is transferred by the transcarboxylase to acetyl-CoA to form malonyl-CoA.</text>
</comment>
<comment type="catalytic activity">
    <reaction evidence="1">
        <text>N(6)-carboxybiotinyl-L-lysyl-[protein] + acetyl-CoA = N(6)-biotinyl-L-lysyl-[protein] + malonyl-CoA</text>
        <dbReference type="Rhea" id="RHEA:54728"/>
        <dbReference type="Rhea" id="RHEA-COMP:10505"/>
        <dbReference type="Rhea" id="RHEA-COMP:10506"/>
        <dbReference type="ChEBI" id="CHEBI:57288"/>
        <dbReference type="ChEBI" id="CHEBI:57384"/>
        <dbReference type="ChEBI" id="CHEBI:83144"/>
        <dbReference type="ChEBI" id="CHEBI:83145"/>
        <dbReference type="EC" id="2.1.3.15"/>
    </reaction>
</comment>
<comment type="cofactor">
    <cofactor evidence="1">
        <name>Zn(2+)</name>
        <dbReference type="ChEBI" id="CHEBI:29105"/>
    </cofactor>
    <text evidence="1">Binds 1 zinc ion per subunit.</text>
</comment>
<comment type="pathway">
    <text evidence="1">Lipid metabolism; malonyl-CoA biosynthesis; malonyl-CoA from acetyl-CoA: step 1/1.</text>
</comment>
<comment type="subunit">
    <text evidence="1">Acetyl-CoA carboxylase is a heterohexamer composed of biotin carboxyl carrier protein (AccB), biotin carboxylase (AccC) and two subunits each of ACCase subunit alpha (AccA) and ACCase subunit beta (AccD).</text>
</comment>
<comment type="subcellular location">
    <subcellularLocation>
        <location evidence="1">Cytoplasm</location>
    </subcellularLocation>
</comment>
<comment type="similarity">
    <text evidence="1">Belongs to the AccD/PCCB family.</text>
</comment>
<proteinExistence type="inferred from homology"/>
<keyword id="KW-0067">ATP-binding</keyword>
<keyword id="KW-0963">Cytoplasm</keyword>
<keyword id="KW-0275">Fatty acid biosynthesis</keyword>
<keyword id="KW-0276">Fatty acid metabolism</keyword>
<keyword id="KW-0444">Lipid biosynthesis</keyword>
<keyword id="KW-0443">Lipid metabolism</keyword>
<keyword id="KW-0479">Metal-binding</keyword>
<keyword id="KW-0547">Nucleotide-binding</keyword>
<keyword id="KW-1185">Reference proteome</keyword>
<keyword id="KW-0808">Transferase</keyword>
<keyword id="KW-0862">Zinc</keyword>
<keyword id="KW-0863">Zinc-finger</keyword>
<evidence type="ECO:0000255" key="1">
    <source>
        <dbReference type="HAMAP-Rule" id="MF_01395"/>
    </source>
</evidence>
<evidence type="ECO:0000255" key="2">
    <source>
        <dbReference type="PROSITE-ProRule" id="PRU01136"/>
    </source>
</evidence>
<dbReference type="EC" id="2.1.3.15" evidence="1"/>
<dbReference type="EMBL" id="AE017226">
    <property type="protein sequence ID" value="AAS11085.1"/>
    <property type="molecule type" value="Genomic_DNA"/>
</dbReference>
<dbReference type="RefSeq" id="NP_971204.1">
    <property type="nucleotide sequence ID" value="NC_002967.9"/>
</dbReference>
<dbReference type="RefSeq" id="WP_002672437.1">
    <property type="nucleotide sequence ID" value="NC_002967.9"/>
</dbReference>
<dbReference type="SMR" id="Q73Q54"/>
<dbReference type="STRING" id="243275.TDE_0590"/>
<dbReference type="PaxDb" id="243275-TDE_0590"/>
<dbReference type="GeneID" id="2741553"/>
<dbReference type="KEGG" id="tde:TDE_0590"/>
<dbReference type="PATRIC" id="fig|243275.7.peg.570"/>
<dbReference type="eggNOG" id="COG0777">
    <property type="taxonomic scope" value="Bacteria"/>
</dbReference>
<dbReference type="HOGENOM" id="CLU_015486_1_1_12"/>
<dbReference type="OrthoDB" id="9772975at2"/>
<dbReference type="UniPathway" id="UPA00655">
    <property type="reaction ID" value="UER00711"/>
</dbReference>
<dbReference type="Proteomes" id="UP000008212">
    <property type="component" value="Chromosome"/>
</dbReference>
<dbReference type="GO" id="GO:0009317">
    <property type="term" value="C:acetyl-CoA carboxylase complex"/>
    <property type="evidence" value="ECO:0007669"/>
    <property type="project" value="InterPro"/>
</dbReference>
<dbReference type="GO" id="GO:0003989">
    <property type="term" value="F:acetyl-CoA carboxylase activity"/>
    <property type="evidence" value="ECO:0007669"/>
    <property type="project" value="InterPro"/>
</dbReference>
<dbReference type="GO" id="GO:0005524">
    <property type="term" value="F:ATP binding"/>
    <property type="evidence" value="ECO:0007669"/>
    <property type="project" value="UniProtKB-KW"/>
</dbReference>
<dbReference type="GO" id="GO:0016743">
    <property type="term" value="F:carboxyl- or carbamoyltransferase activity"/>
    <property type="evidence" value="ECO:0007669"/>
    <property type="project" value="UniProtKB-UniRule"/>
</dbReference>
<dbReference type="GO" id="GO:0008270">
    <property type="term" value="F:zinc ion binding"/>
    <property type="evidence" value="ECO:0007669"/>
    <property type="project" value="UniProtKB-UniRule"/>
</dbReference>
<dbReference type="GO" id="GO:0006633">
    <property type="term" value="P:fatty acid biosynthetic process"/>
    <property type="evidence" value="ECO:0007669"/>
    <property type="project" value="UniProtKB-KW"/>
</dbReference>
<dbReference type="GO" id="GO:2001295">
    <property type="term" value="P:malonyl-CoA biosynthetic process"/>
    <property type="evidence" value="ECO:0007669"/>
    <property type="project" value="UniProtKB-UniRule"/>
</dbReference>
<dbReference type="Gene3D" id="3.90.226.10">
    <property type="entry name" value="2-enoyl-CoA Hydratase, Chain A, domain 1"/>
    <property type="match status" value="1"/>
</dbReference>
<dbReference type="HAMAP" id="MF_01395">
    <property type="entry name" value="AcetylCoA_CT_beta"/>
    <property type="match status" value="1"/>
</dbReference>
<dbReference type="InterPro" id="IPR034733">
    <property type="entry name" value="AcCoA_carboxyl_beta"/>
</dbReference>
<dbReference type="InterPro" id="IPR000438">
    <property type="entry name" value="Acetyl_CoA_COase_Trfase_b_su"/>
</dbReference>
<dbReference type="InterPro" id="IPR029045">
    <property type="entry name" value="ClpP/crotonase-like_dom_sf"/>
</dbReference>
<dbReference type="InterPro" id="IPR011762">
    <property type="entry name" value="COA_CT_N"/>
</dbReference>
<dbReference type="NCBIfam" id="TIGR00515">
    <property type="entry name" value="accD"/>
    <property type="match status" value="1"/>
</dbReference>
<dbReference type="PANTHER" id="PTHR42995">
    <property type="entry name" value="ACETYL-COENZYME A CARBOXYLASE CARBOXYL TRANSFERASE SUBUNIT BETA, CHLOROPLASTIC"/>
    <property type="match status" value="1"/>
</dbReference>
<dbReference type="PANTHER" id="PTHR42995:SF5">
    <property type="entry name" value="ACETYL-COENZYME A CARBOXYLASE CARBOXYL TRANSFERASE SUBUNIT BETA, CHLOROPLASTIC"/>
    <property type="match status" value="1"/>
</dbReference>
<dbReference type="Pfam" id="PF01039">
    <property type="entry name" value="Carboxyl_trans"/>
    <property type="match status" value="1"/>
</dbReference>
<dbReference type="PRINTS" id="PR01070">
    <property type="entry name" value="ACCCTRFRASEB"/>
</dbReference>
<dbReference type="SUPFAM" id="SSF52096">
    <property type="entry name" value="ClpP/crotonase"/>
    <property type="match status" value="1"/>
</dbReference>
<dbReference type="PROSITE" id="PS50980">
    <property type="entry name" value="COA_CT_NTER"/>
    <property type="match status" value="1"/>
</dbReference>
<name>ACCD_TREDE</name>
<sequence length="263" mass="28918">MDCPSCKVSYDEEVFTDNLMVCPHCNCHLRIEPRQRITYLTDENSFQELYPNLKTCNPIEMEGYEEKISAAEEKASLNEAVITGSCKIKGRDALLALMSFHFMGGSMGSVVGEKISRLMLKGATERIPVIIYATSGGARMQEGLFSLMQMAKTSSAAAELDEKGVPLFIMLCDPTTGGVTASFAMLGDITAAEPGALIGFAGPRVIEGTIRQQLPEGFQRAEFQLEKGFVDCIVPRQEQRQFFARMIDAHSLGLKETPKKKKA</sequence>
<reference key="1">
    <citation type="journal article" date="2004" name="Proc. Natl. Acad. Sci. U.S.A.">
        <title>Comparison of the genome of the oral pathogen Treponema denticola with other spirochete genomes.</title>
        <authorList>
            <person name="Seshadri R."/>
            <person name="Myers G.S.A."/>
            <person name="Tettelin H."/>
            <person name="Eisen J.A."/>
            <person name="Heidelberg J.F."/>
            <person name="Dodson R.J."/>
            <person name="Davidsen T.M."/>
            <person name="DeBoy R.T."/>
            <person name="Fouts D.E."/>
            <person name="Haft D.H."/>
            <person name="Selengut J."/>
            <person name="Ren Q."/>
            <person name="Brinkac L.M."/>
            <person name="Madupu R."/>
            <person name="Kolonay J.F."/>
            <person name="Durkin S.A."/>
            <person name="Daugherty S.C."/>
            <person name="Shetty J."/>
            <person name="Shvartsbeyn A."/>
            <person name="Gebregeorgis E."/>
            <person name="Geer K."/>
            <person name="Tsegaye G."/>
            <person name="Malek J.A."/>
            <person name="Ayodeji B."/>
            <person name="Shatsman S."/>
            <person name="McLeod M.P."/>
            <person name="Smajs D."/>
            <person name="Howell J.K."/>
            <person name="Pal S."/>
            <person name="Amin A."/>
            <person name="Vashisth P."/>
            <person name="McNeill T.Z."/>
            <person name="Xiang Q."/>
            <person name="Sodergren E."/>
            <person name="Baca E."/>
            <person name="Weinstock G.M."/>
            <person name="Norris S.J."/>
            <person name="Fraser C.M."/>
            <person name="Paulsen I.T."/>
        </authorList>
    </citation>
    <scope>NUCLEOTIDE SEQUENCE [LARGE SCALE GENOMIC DNA]</scope>
    <source>
        <strain>ATCC 35405 / DSM 14222 / CIP 103919 / JCM 8153 / KCTC 15104</strain>
    </source>
</reference>